<sequence>MSPSRPGFSCSWLPYLLVLPQLAITAIFFLWPAGEALWYSVQTLDPFGLSSEFVGLSNFIQLFQDEYYLASFYTTLIFSALVAGIGLNVSLFLAAMVDYVLRGSRLYQTLLILPYAVAPAVAAVLWIFLFDPGLGLITHALAKLGYSWNHAQNSGQAMFLVVLASVWKQISYNFLFFLAALQSIPKSLVEAAAIDGAGPVRRFFNLVLPLISPVSFFLLVVNLVYAFFDTFPVIDAATGGGPVQATTTLIYKIYREGFAGLDLSSSAAQSVILMLLVIGLTVIQFRFVERKVRY</sequence>
<feature type="chain" id="PRO_0000292838" description="sn-glycerol-3-phosphate transport system permease protein UgpA">
    <location>
        <begin position="1"/>
        <end position="294"/>
    </location>
</feature>
<feature type="topological domain" description="Cytoplasmic" evidence="2">
    <location>
        <begin position="1"/>
        <end position="11"/>
    </location>
</feature>
<feature type="transmembrane region" description="Helical" evidence="3">
    <location>
        <begin position="12"/>
        <end position="32"/>
    </location>
</feature>
<feature type="topological domain" description="Periplasmic" evidence="2">
    <location>
        <begin position="33"/>
        <end position="80"/>
    </location>
</feature>
<feature type="transmembrane region" description="Helical" evidence="3">
    <location>
        <begin position="81"/>
        <end position="101"/>
    </location>
</feature>
<feature type="topological domain" description="Cytoplasmic" evidence="2">
    <location>
        <begin position="102"/>
        <end position="109"/>
    </location>
</feature>
<feature type="transmembrane region" description="Helical" evidence="3">
    <location>
        <begin position="110"/>
        <end position="130"/>
    </location>
</feature>
<feature type="topological domain" description="Periplasmic" evidence="2">
    <location>
        <begin position="131"/>
        <end position="157"/>
    </location>
</feature>
<feature type="transmembrane region" description="Helical" evidence="3">
    <location>
        <begin position="158"/>
        <end position="178"/>
    </location>
</feature>
<feature type="topological domain" description="Cytoplasmic" evidence="2">
    <location>
        <begin position="179"/>
        <end position="207"/>
    </location>
</feature>
<feature type="transmembrane region" description="Helical" evidence="3">
    <location>
        <begin position="208"/>
        <end position="228"/>
    </location>
</feature>
<feature type="topological domain" description="Periplasmic" evidence="2">
    <location>
        <begin position="229"/>
        <end position="262"/>
    </location>
</feature>
<feature type="transmembrane region" description="Helical" evidence="3">
    <location>
        <begin position="263"/>
        <end position="283"/>
    </location>
</feature>
<feature type="topological domain" description="Cytoplasmic" evidence="2">
    <location>
        <begin position="284"/>
        <end position="294"/>
    </location>
</feature>
<feature type="domain" description="ABC transmembrane type-1" evidence="3">
    <location>
        <begin position="72"/>
        <end position="284"/>
    </location>
</feature>
<accession>Q66FU6</accession>
<name>UGPA_YERPS</name>
<organism>
    <name type="scientific">Yersinia pseudotuberculosis serotype I (strain IP32953)</name>
    <dbReference type="NCBI Taxonomy" id="273123"/>
    <lineage>
        <taxon>Bacteria</taxon>
        <taxon>Pseudomonadati</taxon>
        <taxon>Pseudomonadota</taxon>
        <taxon>Gammaproteobacteria</taxon>
        <taxon>Enterobacterales</taxon>
        <taxon>Yersiniaceae</taxon>
        <taxon>Yersinia</taxon>
    </lineage>
</organism>
<protein>
    <recommendedName>
        <fullName evidence="1">sn-glycerol-3-phosphate transport system permease protein UgpA</fullName>
    </recommendedName>
</protein>
<comment type="function">
    <text evidence="1">Part of the ABC transporter complex UgpBAEC involved in sn-glycerol-3-phosphate (G3P) import. Probably responsible for the translocation of the substrate across the membrane.</text>
</comment>
<comment type="subunit">
    <text evidence="1">The complex is composed of two ATP-binding proteins (UgpC), two transmembrane proteins (UgpA and UgpE) and a solute-binding protein (UgpB).</text>
</comment>
<comment type="subcellular location">
    <subcellularLocation>
        <location evidence="1">Cell inner membrane</location>
        <topology evidence="2">Multi-pass membrane protein</topology>
    </subcellularLocation>
</comment>
<comment type="similarity">
    <text evidence="4">Belongs to the binding-protein-dependent transport system permease family. UgpAE subfamily.</text>
</comment>
<dbReference type="EMBL" id="BX936398">
    <property type="protein sequence ID" value="CAH19479.1"/>
    <property type="molecule type" value="Genomic_DNA"/>
</dbReference>
<dbReference type="RefSeq" id="WP_011191532.1">
    <property type="nucleotide sequence ID" value="NC_006155.1"/>
</dbReference>
<dbReference type="SMR" id="Q66FU6"/>
<dbReference type="KEGG" id="ypo:BZ17_2344"/>
<dbReference type="KEGG" id="yps:YPTB0239"/>
<dbReference type="PATRIC" id="fig|273123.14.peg.2466"/>
<dbReference type="Proteomes" id="UP000001011">
    <property type="component" value="Chromosome"/>
</dbReference>
<dbReference type="GO" id="GO:0005886">
    <property type="term" value="C:plasma membrane"/>
    <property type="evidence" value="ECO:0007669"/>
    <property type="project" value="UniProtKB-SubCell"/>
</dbReference>
<dbReference type="GO" id="GO:0055085">
    <property type="term" value="P:transmembrane transport"/>
    <property type="evidence" value="ECO:0007669"/>
    <property type="project" value="InterPro"/>
</dbReference>
<dbReference type="CDD" id="cd06261">
    <property type="entry name" value="TM_PBP2"/>
    <property type="match status" value="1"/>
</dbReference>
<dbReference type="FunFam" id="1.10.3720.10:FF:000028">
    <property type="entry name" value="sn-glycerol-3-phosphate ABC transporter permease UgpA"/>
    <property type="match status" value="1"/>
</dbReference>
<dbReference type="Gene3D" id="1.10.3720.10">
    <property type="entry name" value="MetI-like"/>
    <property type="match status" value="1"/>
</dbReference>
<dbReference type="InterPro" id="IPR000515">
    <property type="entry name" value="MetI-like"/>
</dbReference>
<dbReference type="InterPro" id="IPR035906">
    <property type="entry name" value="MetI-like_sf"/>
</dbReference>
<dbReference type="InterPro" id="IPR050809">
    <property type="entry name" value="UgpAE/MalFG_permease"/>
</dbReference>
<dbReference type="NCBIfam" id="NF007852">
    <property type="entry name" value="PRK10561.1"/>
    <property type="match status" value="1"/>
</dbReference>
<dbReference type="PANTHER" id="PTHR43227">
    <property type="entry name" value="BLL4140 PROTEIN"/>
    <property type="match status" value="1"/>
</dbReference>
<dbReference type="PANTHER" id="PTHR43227:SF9">
    <property type="entry name" value="SN-GLYCEROL-3-PHOSPHATE TRANSPORT SYSTEM PERMEASE PROTEIN UGPA"/>
    <property type="match status" value="1"/>
</dbReference>
<dbReference type="Pfam" id="PF00528">
    <property type="entry name" value="BPD_transp_1"/>
    <property type="match status" value="1"/>
</dbReference>
<dbReference type="SUPFAM" id="SSF161098">
    <property type="entry name" value="MetI-like"/>
    <property type="match status" value="1"/>
</dbReference>
<dbReference type="PROSITE" id="PS50928">
    <property type="entry name" value="ABC_TM1"/>
    <property type="match status" value="1"/>
</dbReference>
<reference key="1">
    <citation type="journal article" date="2004" name="Proc. Natl. Acad. Sci. U.S.A.">
        <title>Insights into the evolution of Yersinia pestis through whole-genome comparison with Yersinia pseudotuberculosis.</title>
        <authorList>
            <person name="Chain P.S.G."/>
            <person name="Carniel E."/>
            <person name="Larimer F.W."/>
            <person name="Lamerdin J."/>
            <person name="Stoutland P.O."/>
            <person name="Regala W.M."/>
            <person name="Georgescu A.M."/>
            <person name="Vergez L.M."/>
            <person name="Land M.L."/>
            <person name="Motin V.L."/>
            <person name="Brubaker R.R."/>
            <person name="Fowler J."/>
            <person name="Hinnebusch J."/>
            <person name="Marceau M."/>
            <person name="Medigue C."/>
            <person name="Simonet M."/>
            <person name="Chenal-Francisque V."/>
            <person name="Souza B."/>
            <person name="Dacheux D."/>
            <person name="Elliott J.M."/>
            <person name="Derbise A."/>
            <person name="Hauser L.J."/>
            <person name="Garcia E."/>
        </authorList>
    </citation>
    <scope>NUCLEOTIDE SEQUENCE [LARGE SCALE GENOMIC DNA]</scope>
    <source>
        <strain>IP32953</strain>
    </source>
</reference>
<keyword id="KW-0997">Cell inner membrane</keyword>
<keyword id="KW-1003">Cell membrane</keyword>
<keyword id="KW-0472">Membrane</keyword>
<keyword id="KW-0812">Transmembrane</keyword>
<keyword id="KW-1133">Transmembrane helix</keyword>
<keyword id="KW-0813">Transport</keyword>
<evidence type="ECO:0000250" key="1">
    <source>
        <dbReference type="UniProtKB" id="P10905"/>
    </source>
</evidence>
<evidence type="ECO:0000255" key="2"/>
<evidence type="ECO:0000255" key="3">
    <source>
        <dbReference type="PROSITE-ProRule" id="PRU00441"/>
    </source>
</evidence>
<evidence type="ECO:0000305" key="4"/>
<proteinExistence type="inferred from homology"/>
<gene>
    <name type="primary">ugpA</name>
    <name type="ordered locus">YPTB0239</name>
</gene>